<sequence length="264" mass="28864">MDVYGLSSPDLLRIDDLLDFSNEDIFSASSSGGSTAATSSSSFPPPQNPSFHHHHLPSSADHHSFLHDICVPSDDAAHLEWLSQFVDDSFADFPANPLGGTMTSVKTETSFPGKPRSKRSRAPAPFAGTWSPMPLESEHQQLHSAAKFKPKKEQSGGGGGGGGRHQSSSSETTEGGGMRRCTHCASEKTPQWRTGPLGPKTLCNACGVRFKSGRLVPEYRPASSPTFVLTQHSNSHRKVMELRRQKEVMRQPQQVQLHHHHHPF</sequence>
<protein>
    <recommendedName>
        <fullName>GATA transcription factor 2</fullName>
        <shortName>AtGATA-2</shortName>
    </recommendedName>
</protein>
<dbReference type="EMBL" id="Y13649">
    <property type="protein sequence ID" value="CAA74000.1"/>
    <property type="molecule type" value="mRNA"/>
</dbReference>
<dbReference type="EMBL" id="CP002685">
    <property type="protein sequence ID" value="AEC10500.1"/>
    <property type="molecule type" value="Genomic_DNA"/>
</dbReference>
<dbReference type="EMBL" id="BT000921">
    <property type="protein sequence ID" value="AAN41321.1"/>
    <property type="molecule type" value="mRNA"/>
</dbReference>
<dbReference type="PIR" id="T52104">
    <property type="entry name" value="T52104"/>
</dbReference>
<dbReference type="RefSeq" id="NP_182031.1">
    <property type="nucleotide sequence ID" value="NM_130069.3"/>
</dbReference>
<dbReference type="SMR" id="O49741"/>
<dbReference type="FunCoup" id="O49741">
    <property type="interactions" value="5"/>
</dbReference>
<dbReference type="STRING" id="3702.O49741"/>
<dbReference type="PaxDb" id="3702-AT2G45050.1"/>
<dbReference type="EnsemblPlants" id="AT2G45050.1">
    <property type="protein sequence ID" value="AT2G45050.1"/>
    <property type="gene ID" value="AT2G45050"/>
</dbReference>
<dbReference type="GeneID" id="819112"/>
<dbReference type="Gramene" id="AT2G45050.1">
    <property type="protein sequence ID" value="AT2G45050.1"/>
    <property type="gene ID" value="AT2G45050"/>
</dbReference>
<dbReference type="KEGG" id="ath:AT2G45050"/>
<dbReference type="Araport" id="AT2G45050"/>
<dbReference type="TAIR" id="AT2G45050">
    <property type="gene designation" value="GATA2"/>
</dbReference>
<dbReference type="eggNOG" id="KOG1601">
    <property type="taxonomic scope" value="Eukaryota"/>
</dbReference>
<dbReference type="HOGENOM" id="CLU_045755_1_1_1"/>
<dbReference type="InParanoid" id="O49741"/>
<dbReference type="OMA" id="SEWEIAM"/>
<dbReference type="OrthoDB" id="2162994at2759"/>
<dbReference type="PhylomeDB" id="O49741"/>
<dbReference type="PRO" id="PR:O49741"/>
<dbReference type="Proteomes" id="UP000006548">
    <property type="component" value="Chromosome 2"/>
</dbReference>
<dbReference type="ExpressionAtlas" id="O49741">
    <property type="expression patterns" value="baseline and differential"/>
</dbReference>
<dbReference type="GO" id="GO:0005634">
    <property type="term" value="C:nucleus"/>
    <property type="evidence" value="ECO:0007669"/>
    <property type="project" value="UniProtKB-SubCell"/>
</dbReference>
<dbReference type="GO" id="GO:0003700">
    <property type="term" value="F:DNA-binding transcription factor activity"/>
    <property type="evidence" value="ECO:0000314"/>
    <property type="project" value="TAIR"/>
</dbReference>
<dbReference type="GO" id="GO:0043565">
    <property type="term" value="F:sequence-specific DNA binding"/>
    <property type="evidence" value="ECO:0007669"/>
    <property type="project" value="InterPro"/>
</dbReference>
<dbReference type="GO" id="GO:0008270">
    <property type="term" value="F:zinc ion binding"/>
    <property type="evidence" value="ECO:0007669"/>
    <property type="project" value="UniProtKB-KW"/>
</dbReference>
<dbReference type="GO" id="GO:0045893">
    <property type="term" value="P:positive regulation of DNA-templated transcription"/>
    <property type="evidence" value="ECO:0007669"/>
    <property type="project" value="InterPro"/>
</dbReference>
<dbReference type="GO" id="GO:0009416">
    <property type="term" value="P:response to light stimulus"/>
    <property type="evidence" value="ECO:0000270"/>
    <property type="project" value="TAIR"/>
</dbReference>
<dbReference type="CDD" id="cd00202">
    <property type="entry name" value="ZnF_GATA"/>
    <property type="match status" value="1"/>
</dbReference>
<dbReference type="FunFam" id="3.30.50.10:FF:000018">
    <property type="entry name" value="GATA transcription factor"/>
    <property type="match status" value="1"/>
</dbReference>
<dbReference type="Gene3D" id="3.30.50.10">
    <property type="entry name" value="Erythroid Transcription Factor GATA-1, subunit A"/>
    <property type="match status" value="1"/>
</dbReference>
<dbReference type="InterPro" id="IPR051140">
    <property type="entry name" value="GATA_TF"/>
</dbReference>
<dbReference type="InterPro" id="IPR016679">
    <property type="entry name" value="TF_GATA_pln"/>
</dbReference>
<dbReference type="InterPro" id="IPR000679">
    <property type="entry name" value="Znf_GATA"/>
</dbReference>
<dbReference type="InterPro" id="IPR013088">
    <property type="entry name" value="Znf_NHR/GATA"/>
</dbReference>
<dbReference type="PANTHER" id="PTHR45658">
    <property type="entry name" value="GATA TRANSCRIPTION FACTOR"/>
    <property type="match status" value="1"/>
</dbReference>
<dbReference type="PANTHER" id="PTHR45658:SF113">
    <property type="entry name" value="GATA TRANSCRIPTION FACTOR 2"/>
    <property type="match status" value="1"/>
</dbReference>
<dbReference type="Pfam" id="PF00320">
    <property type="entry name" value="GATA"/>
    <property type="match status" value="1"/>
</dbReference>
<dbReference type="PIRSF" id="PIRSF016992">
    <property type="entry name" value="TF_GATA_plant"/>
    <property type="match status" value="1"/>
</dbReference>
<dbReference type="SMART" id="SM00401">
    <property type="entry name" value="ZnF_GATA"/>
    <property type="match status" value="1"/>
</dbReference>
<dbReference type="SUPFAM" id="SSF57716">
    <property type="entry name" value="Glucocorticoid receptor-like (DNA-binding domain)"/>
    <property type="match status" value="1"/>
</dbReference>
<dbReference type="PROSITE" id="PS00344">
    <property type="entry name" value="GATA_ZN_FINGER_1"/>
    <property type="match status" value="1"/>
</dbReference>
<dbReference type="PROSITE" id="PS50114">
    <property type="entry name" value="GATA_ZN_FINGER_2"/>
    <property type="match status" value="1"/>
</dbReference>
<gene>
    <name type="primary">GATA2</name>
    <name type="ordered locus">At2g45050</name>
    <name type="ORF">T14P1.14</name>
</gene>
<organism>
    <name type="scientific">Arabidopsis thaliana</name>
    <name type="common">Mouse-ear cress</name>
    <dbReference type="NCBI Taxonomy" id="3702"/>
    <lineage>
        <taxon>Eukaryota</taxon>
        <taxon>Viridiplantae</taxon>
        <taxon>Streptophyta</taxon>
        <taxon>Embryophyta</taxon>
        <taxon>Tracheophyta</taxon>
        <taxon>Spermatophyta</taxon>
        <taxon>Magnoliopsida</taxon>
        <taxon>eudicotyledons</taxon>
        <taxon>Gunneridae</taxon>
        <taxon>Pentapetalae</taxon>
        <taxon>rosids</taxon>
        <taxon>malvids</taxon>
        <taxon>Brassicales</taxon>
        <taxon>Brassicaceae</taxon>
        <taxon>Camelineae</taxon>
        <taxon>Arabidopsis</taxon>
    </lineage>
</organism>
<name>GATA2_ARATH</name>
<reference key="1">
    <citation type="journal article" date="2002" name="Plant Mol. Biol.">
        <title>Arabidopsis thaliana GATA factors: organisation, expression and DNA-binding characteristics.</title>
        <authorList>
            <person name="Teakle G.R."/>
            <person name="Manfield I.W."/>
            <person name="Graham J.F."/>
            <person name="Gilmartin P.M."/>
        </authorList>
    </citation>
    <scope>NUCLEOTIDE SEQUENCE [MRNA]</scope>
    <scope>FUNCTION</scope>
    <scope>TISSUE SPECIFICITY</scope>
    <source>
        <strain>cv. Columbia</strain>
    </source>
</reference>
<reference key="2">
    <citation type="journal article" date="1999" name="Nature">
        <title>Sequence and analysis of chromosome 2 of the plant Arabidopsis thaliana.</title>
        <authorList>
            <person name="Lin X."/>
            <person name="Kaul S."/>
            <person name="Rounsley S.D."/>
            <person name="Shea T.P."/>
            <person name="Benito M.-I."/>
            <person name="Town C.D."/>
            <person name="Fujii C.Y."/>
            <person name="Mason T.M."/>
            <person name="Bowman C.L."/>
            <person name="Barnstead M.E."/>
            <person name="Feldblyum T.V."/>
            <person name="Buell C.R."/>
            <person name="Ketchum K.A."/>
            <person name="Lee J.J."/>
            <person name="Ronning C.M."/>
            <person name="Koo H.L."/>
            <person name="Moffat K.S."/>
            <person name="Cronin L.A."/>
            <person name="Shen M."/>
            <person name="Pai G."/>
            <person name="Van Aken S."/>
            <person name="Umayam L."/>
            <person name="Tallon L.J."/>
            <person name="Gill J.E."/>
            <person name="Adams M.D."/>
            <person name="Carrera A.J."/>
            <person name="Creasy T.H."/>
            <person name="Goodman H.M."/>
            <person name="Somerville C.R."/>
            <person name="Copenhaver G.P."/>
            <person name="Preuss D."/>
            <person name="Nierman W.C."/>
            <person name="White O."/>
            <person name="Eisen J.A."/>
            <person name="Salzberg S.L."/>
            <person name="Fraser C.M."/>
            <person name="Venter J.C."/>
        </authorList>
    </citation>
    <scope>NUCLEOTIDE SEQUENCE [LARGE SCALE GENOMIC DNA]</scope>
    <source>
        <strain>cv. Columbia</strain>
    </source>
</reference>
<reference key="3">
    <citation type="journal article" date="2017" name="Plant J.">
        <title>Araport11: a complete reannotation of the Arabidopsis thaliana reference genome.</title>
        <authorList>
            <person name="Cheng C.Y."/>
            <person name="Krishnakumar V."/>
            <person name="Chan A.P."/>
            <person name="Thibaud-Nissen F."/>
            <person name="Schobel S."/>
            <person name="Town C.D."/>
        </authorList>
    </citation>
    <scope>GENOME REANNOTATION</scope>
    <source>
        <strain>cv. Columbia</strain>
    </source>
</reference>
<reference key="4">
    <citation type="journal article" date="2003" name="Science">
        <title>Empirical analysis of transcriptional activity in the Arabidopsis genome.</title>
        <authorList>
            <person name="Yamada K."/>
            <person name="Lim J."/>
            <person name="Dale J.M."/>
            <person name="Chen H."/>
            <person name="Shinn P."/>
            <person name="Palm C.J."/>
            <person name="Southwick A.M."/>
            <person name="Wu H.C."/>
            <person name="Kim C.J."/>
            <person name="Nguyen M."/>
            <person name="Pham P.K."/>
            <person name="Cheuk R.F."/>
            <person name="Karlin-Newmann G."/>
            <person name="Liu S.X."/>
            <person name="Lam B."/>
            <person name="Sakano H."/>
            <person name="Wu T."/>
            <person name="Yu G."/>
            <person name="Miranda M."/>
            <person name="Quach H.L."/>
            <person name="Tripp M."/>
            <person name="Chang C.H."/>
            <person name="Lee J.M."/>
            <person name="Toriumi M.J."/>
            <person name="Chan M.M."/>
            <person name="Tang C.C."/>
            <person name="Onodera C.S."/>
            <person name="Deng J.M."/>
            <person name="Akiyama K."/>
            <person name="Ansari Y."/>
            <person name="Arakawa T."/>
            <person name="Banh J."/>
            <person name="Banno F."/>
            <person name="Bowser L."/>
            <person name="Brooks S.Y."/>
            <person name="Carninci P."/>
            <person name="Chao Q."/>
            <person name="Choy N."/>
            <person name="Enju A."/>
            <person name="Goldsmith A.D."/>
            <person name="Gurjal M."/>
            <person name="Hansen N.F."/>
            <person name="Hayashizaki Y."/>
            <person name="Johnson-Hopson C."/>
            <person name="Hsuan V.W."/>
            <person name="Iida K."/>
            <person name="Karnes M."/>
            <person name="Khan S."/>
            <person name="Koesema E."/>
            <person name="Ishida J."/>
            <person name="Jiang P.X."/>
            <person name="Jones T."/>
            <person name="Kawai J."/>
            <person name="Kamiya A."/>
            <person name="Meyers C."/>
            <person name="Nakajima M."/>
            <person name="Narusaka M."/>
            <person name="Seki M."/>
            <person name="Sakurai T."/>
            <person name="Satou M."/>
            <person name="Tamse R."/>
            <person name="Vaysberg M."/>
            <person name="Wallender E.K."/>
            <person name="Wong C."/>
            <person name="Yamamura Y."/>
            <person name="Yuan S."/>
            <person name="Shinozaki K."/>
            <person name="Davis R.W."/>
            <person name="Theologis A."/>
            <person name="Ecker J.R."/>
        </authorList>
    </citation>
    <scope>NUCLEOTIDE SEQUENCE [LARGE SCALE MRNA]</scope>
    <source>
        <strain>cv. Columbia</strain>
    </source>
</reference>
<reference key="5">
    <citation type="journal article" date="2004" name="Plant Physiol.">
        <title>The GATA family of transcription factors in Arabidopsis and rice.</title>
        <authorList>
            <person name="Reyes J.C."/>
            <person name="Muro-Pastor M.I."/>
            <person name="Florencio F.J."/>
        </authorList>
    </citation>
    <scope>GENE FAMILY ORGANIZATION</scope>
</reference>
<keyword id="KW-0010">Activator</keyword>
<keyword id="KW-0238">DNA-binding</keyword>
<keyword id="KW-0479">Metal-binding</keyword>
<keyword id="KW-0539">Nucleus</keyword>
<keyword id="KW-1185">Reference proteome</keyword>
<keyword id="KW-0804">Transcription</keyword>
<keyword id="KW-0805">Transcription regulation</keyword>
<keyword id="KW-0862">Zinc</keyword>
<keyword id="KW-0863">Zinc-finger</keyword>
<evidence type="ECO:0000255" key="1"/>
<evidence type="ECO:0000255" key="2">
    <source>
        <dbReference type="PROSITE-ProRule" id="PRU00094"/>
    </source>
</evidence>
<evidence type="ECO:0000256" key="3">
    <source>
        <dbReference type="SAM" id="MobiDB-lite"/>
    </source>
</evidence>
<evidence type="ECO:0000269" key="4">
    <source>
    </source>
</evidence>
<evidence type="ECO:0000305" key="5"/>
<comment type="function">
    <text evidence="4">Transcriptional activator that specifically binds 5'-GATA-3' or 5'-GAT-3' motifs within gene promoters. May be involved in the regulation of some light-responsive genes.</text>
</comment>
<comment type="subcellular location">
    <subcellularLocation>
        <location evidence="5">Nucleus</location>
    </subcellularLocation>
</comment>
<comment type="tissue specificity">
    <text evidence="4">Mostly expressed in roots. Also expressed in flowers and leaves, and to a lower extent in stems.</text>
</comment>
<comment type="similarity">
    <text evidence="5">Belongs to the type IV zinc-finger family. Class A subfamily.</text>
</comment>
<feature type="chain" id="PRO_0000083431" description="GATA transcription factor 2">
    <location>
        <begin position="1"/>
        <end position="264"/>
    </location>
</feature>
<feature type="zinc finger region" description="GATA-type" evidence="2">
    <location>
        <begin position="175"/>
        <end position="229"/>
    </location>
</feature>
<feature type="region of interest" description="Disordered" evidence="3">
    <location>
        <begin position="29"/>
        <end position="57"/>
    </location>
</feature>
<feature type="region of interest" description="Disordered" evidence="3">
    <location>
        <begin position="96"/>
        <end position="192"/>
    </location>
</feature>
<feature type="short sequence motif" description="Nuclear localization signal" evidence="1">
    <location>
        <begin position="114"/>
        <end position="121"/>
    </location>
</feature>
<feature type="compositionally biased region" description="Low complexity" evidence="3">
    <location>
        <begin position="29"/>
        <end position="42"/>
    </location>
</feature>
<feature type="compositionally biased region" description="Polar residues" evidence="3">
    <location>
        <begin position="101"/>
        <end position="110"/>
    </location>
</feature>
<feature type="compositionally biased region" description="Gly residues" evidence="3">
    <location>
        <begin position="155"/>
        <end position="164"/>
    </location>
</feature>
<proteinExistence type="evidence at transcript level"/>
<accession>O49741</accession>